<dbReference type="EMBL" id="Z72848">
    <property type="protein sequence ID" value="CAA97066.1"/>
    <property type="molecule type" value="Genomic_DNA"/>
</dbReference>
<dbReference type="PIR" id="S64359">
    <property type="entry name" value="S64359"/>
</dbReference>
<dbReference type="DIP" id="DIP-5105N"/>
<dbReference type="IntAct" id="P53240">
    <property type="interactions" value="1"/>
</dbReference>
<dbReference type="STRING" id="4932.YGR064W"/>
<dbReference type="PaxDb" id="4932-YGR064W"/>
<dbReference type="EnsemblFungi" id="YGR064W_mRNA">
    <property type="protein sequence ID" value="YGR064W"/>
    <property type="gene ID" value="YGR064W"/>
</dbReference>
<dbReference type="AGR" id="SGD:S000003296"/>
<dbReference type="SGD" id="S000003296">
    <property type="gene designation" value="YGR064W"/>
</dbReference>
<dbReference type="HOGENOM" id="CLU_2028528_0_0_1"/>
<dbReference type="GO" id="GO:0008361">
    <property type="term" value="P:regulation of cell size"/>
    <property type="evidence" value="ECO:0007001"/>
    <property type="project" value="SGD"/>
</dbReference>
<organism>
    <name type="scientific">Saccharomyces cerevisiae (strain ATCC 204508 / S288c)</name>
    <name type="common">Baker's yeast</name>
    <dbReference type="NCBI Taxonomy" id="559292"/>
    <lineage>
        <taxon>Eukaryota</taxon>
        <taxon>Fungi</taxon>
        <taxon>Dikarya</taxon>
        <taxon>Ascomycota</taxon>
        <taxon>Saccharomycotina</taxon>
        <taxon>Saccharomycetes</taxon>
        <taxon>Saccharomycetales</taxon>
        <taxon>Saccharomycetaceae</taxon>
        <taxon>Saccharomyces</taxon>
    </lineage>
</organism>
<comment type="miscellaneous">
    <text evidence="1">Partially overlaps SPT4.</text>
</comment>
<comment type="caution">
    <text evidence="2">Product of a dubious gene prediction unlikely to encode a functional protein. Because of that it is not part of the S.cerevisiae S288c complete/reference proteome set.</text>
</comment>
<feature type="chain" id="PRO_0000202802" description="Putative uncharacterized protein YGR064W">
    <location>
        <begin position="1"/>
        <end position="122"/>
    </location>
</feature>
<protein>
    <recommendedName>
        <fullName>Putative uncharacterized protein YGR064W</fullName>
    </recommendedName>
</protein>
<accession>P53240</accession>
<sequence length="122" mass="14391">MIYAQPLCYPRLSRLTHSYEALERRRRTFHCRNTCLFKNTLTVGTTISIKLICGLHYATQHTGSFTRHLLHCTSFAFAKLNVARCNYYTVHPSSPFLNFTFSLDFTHRTYKVTFINIEINYR</sequence>
<gene>
    <name type="ordered locus">YGR064W</name>
</gene>
<evidence type="ECO:0000305" key="1"/>
<evidence type="ECO:0000305" key="2">
    <source>
    </source>
</evidence>
<proteinExistence type="uncertain"/>
<reference key="1">
    <citation type="journal article" date="1997" name="Nature">
        <title>The nucleotide sequence of Saccharomyces cerevisiae chromosome VII.</title>
        <authorList>
            <person name="Tettelin H."/>
            <person name="Agostoni-Carbone M.L."/>
            <person name="Albermann K."/>
            <person name="Albers M."/>
            <person name="Arroyo J."/>
            <person name="Backes U."/>
            <person name="Barreiros T."/>
            <person name="Bertani I."/>
            <person name="Bjourson A.J."/>
            <person name="Brueckner M."/>
            <person name="Bruschi C.V."/>
            <person name="Carignani G."/>
            <person name="Castagnoli L."/>
            <person name="Cerdan E."/>
            <person name="Clemente M.L."/>
            <person name="Coblenz A."/>
            <person name="Coglievina M."/>
            <person name="Coissac E."/>
            <person name="Defoor E."/>
            <person name="Del Bino S."/>
            <person name="Delius H."/>
            <person name="Delneri D."/>
            <person name="de Wergifosse P."/>
            <person name="Dujon B."/>
            <person name="Durand P."/>
            <person name="Entian K.-D."/>
            <person name="Eraso P."/>
            <person name="Escribano V."/>
            <person name="Fabiani L."/>
            <person name="Fartmann B."/>
            <person name="Feroli F."/>
            <person name="Feuermann M."/>
            <person name="Frontali L."/>
            <person name="Garcia-Gonzalez M."/>
            <person name="Garcia-Saez M.I."/>
            <person name="Goffeau A."/>
            <person name="Guerreiro P."/>
            <person name="Hani J."/>
            <person name="Hansen M."/>
            <person name="Hebling U."/>
            <person name="Hernandez K."/>
            <person name="Heumann K."/>
            <person name="Hilger F."/>
            <person name="Hofmann B."/>
            <person name="Indge K.J."/>
            <person name="James C.M."/>
            <person name="Klima R."/>
            <person name="Koetter P."/>
            <person name="Kramer B."/>
            <person name="Kramer W."/>
            <person name="Lauquin G."/>
            <person name="Leuther H."/>
            <person name="Louis E.J."/>
            <person name="Maillier E."/>
            <person name="Marconi A."/>
            <person name="Martegani E."/>
            <person name="Mazon M.J."/>
            <person name="Mazzoni C."/>
            <person name="McReynolds A.D.K."/>
            <person name="Melchioretto P."/>
            <person name="Mewes H.-W."/>
            <person name="Minenkova O."/>
            <person name="Mueller-Auer S."/>
            <person name="Nawrocki A."/>
            <person name="Netter P."/>
            <person name="Neu R."/>
            <person name="Nombela C."/>
            <person name="Oliver S.G."/>
            <person name="Panzeri L."/>
            <person name="Paoluzi S."/>
            <person name="Plevani P."/>
            <person name="Portetelle D."/>
            <person name="Portillo F."/>
            <person name="Potier S."/>
            <person name="Purnelle B."/>
            <person name="Rieger M."/>
            <person name="Riles L."/>
            <person name="Rinaldi T."/>
            <person name="Robben J."/>
            <person name="Rodrigues-Pousada C."/>
            <person name="Rodriguez-Belmonte E."/>
            <person name="Rodriguez-Torres A.M."/>
            <person name="Rose M."/>
            <person name="Ruzzi M."/>
            <person name="Saliola M."/>
            <person name="Sanchez-Perez M."/>
            <person name="Schaefer B."/>
            <person name="Schaefer M."/>
            <person name="Scharfe M."/>
            <person name="Schmidheini T."/>
            <person name="Schreer A."/>
            <person name="Skala J."/>
            <person name="Souciet J.-L."/>
            <person name="Steensma H.Y."/>
            <person name="Talla E."/>
            <person name="Thierry A."/>
            <person name="Vandenbol M."/>
            <person name="van der Aart Q.J.M."/>
            <person name="Van Dyck L."/>
            <person name="Vanoni M."/>
            <person name="Verhasselt P."/>
            <person name="Voet M."/>
            <person name="Volckaert G."/>
            <person name="Wambutt R."/>
            <person name="Watson M.D."/>
            <person name="Weber N."/>
            <person name="Wedler E."/>
            <person name="Wedler H."/>
            <person name="Wipfli P."/>
            <person name="Wolf K."/>
            <person name="Wright L.F."/>
            <person name="Zaccaria P."/>
            <person name="Zimmermann M."/>
            <person name="Zollner A."/>
            <person name="Kleine K."/>
        </authorList>
    </citation>
    <scope>NUCLEOTIDE SEQUENCE [LARGE SCALE GENOMIC DNA]</scope>
    <source>
        <strain>ATCC 204508 / S288c</strain>
    </source>
</reference>
<reference key="2">
    <citation type="journal article" date="2014" name="G3 (Bethesda)">
        <title>The reference genome sequence of Saccharomyces cerevisiae: Then and now.</title>
        <authorList>
            <person name="Engel S.R."/>
            <person name="Dietrich F.S."/>
            <person name="Fisk D.G."/>
            <person name="Binkley G."/>
            <person name="Balakrishnan R."/>
            <person name="Costanzo M.C."/>
            <person name="Dwight S.S."/>
            <person name="Hitz B.C."/>
            <person name="Karra K."/>
            <person name="Nash R.S."/>
            <person name="Weng S."/>
            <person name="Wong E.D."/>
            <person name="Lloyd P."/>
            <person name="Skrzypek M.S."/>
            <person name="Miyasato S.R."/>
            <person name="Simison M."/>
            <person name="Cherry J.M."/>
        </authorList>
    </citation>
    <scope>GENOME REANNOTATION</scope>
    <source>
        <strain>ATCC 204508 / S288c</strain>
    </source>
</reference>
<name>YG27_YEAST</name>